<proteinExistence type="inferred from homology"/>
<feature type="chain" id="PRO_0000431876" description="Inositol-tetrakisphosphate 1-kinase 4">
    <location>
        <begin position="1"/>
        <end position="355"/>
    </location>
</feature>
<feature type="domain" description="ATP-grasp" evidence="4">
    <location>
        <begin position="107"/>
        <end position="318"/>
    </location>
</feature>
<feature type="region of interest" description="Disordered" evidence="5">
    <location>
        <begin position="225"/>
        <end position="248"/>
    </location>
</feature>
<feature type="compositionally biased region" description="Acidic residues" evidence="5">
    <location>
        <begin position="236"/>
        <end position="247"/>
    </location>
</feature>
<feature type="binding site" evidence="3">
    <location>
        <position position="65"/>
    </location>
    <ligand>
        <name>1D-myo-inositol 1,3,4-trisphosphate</name>
        <dbReference type="ChEBI" id="CHEBI:58414"/>
    </ligand>
</feature>
<feature type="binding site" evidence="1">
    <location>
        <position position="101"/>
    </location>
    <ligand>
        <name>ATP</name>
        <dbReference type="ChEBI" id="CHEBI:30616"/>
    </ligand>
</feature>
<feature type="binding site" evidence="1">
    <location>
        <position position="146"/>
    </location>
    <ligand>
        <name>ATP</name>
        <dbReference type="ChEBI" id="CHEBI:30616"/>
    </ligand>
</feature>
<feature type="binding site" evidence="3">
    <location>
        <position position="157"/>
    </location>
    <ligand>
        <name>1D-myo-inositol 1,3,4-trisphosphate</name>
        <dbReference type="ChEBI" id="CHEBI:58414"/>
    </ligand>
</feature>
<feature type="binding site" evidence="1">
    <location>
        <begin position="179"/>
        <end position="190"/>
    </location>
    <ligand>
        <name>ATP</name>
        <dbReference type="ChEBI" id="CHEBI:30616"/>
    </ligand>
</feature>
<feature type="binding site" evidence="3">
    <location>
        <position position="190"/>
    </location>
    <ligand>
        <name>1D-myo-inositol 1,3,4-trisphosphate</name>
        <dbReference type="ChEBI" id="CHEBI:58414"/>
    </ligand>
</feature>
<feature type="binding site" evidence="1">
    <location>
        <position position="205"/>
    </location>
    <ligand>
        <name>ATP</name>
        <dbReference type="ChEBI" id="CHEBI:30616"/>
    </ligand>
</feature>
<feature type="binding site" evidence="1">
    <location>
        <position position="272"/>
    </location>
    <ligand>
        <name>Mg(2+)</name>
        <dbReference type="ChEBI" id="CHEBI:18420"/>
        <label>1</label>
    </ligand>
</feature>
<feature type="binding site" evidence="1">
    <location>
        <position position="289"/>
    </location>
    <ligand>
        <name>Mg(2+)</name>
        <dbReference type="ChEBI" id="CHEBI:18420"/>
        <label>1</label>
    </ligand>
</feature>
<feature type="binding site" evidence="1">
    <location>
        <position position="289"/>
    </location>
    <ligand>
        <name>Mg(2+)</name>
        <dbReference type="ChEBI" id="CHEBI:18420"/>
        <label>2</label>
    </ligand>
</feature>
<feature type="binding site" evidence="3">
    <location>
        <position position="291"/>
    </location>
    <ligand>
        <name>1D-myo-inositol 1,3,4-trisphosphate</name>
        <dbReference type="ChEBI" id="CHEBI:58414"/>
    </ligand>
</feature>
<feature type="binding site" evidence="1">
    <location>
        <position position="291"/>
    </location>
    <ligand>
        <name>Mg(2+)</name>
        <dbReference type="ChEBI" id="CHEBI:18420"/>
        <label>2</label>
    </ligand>
</feature>
<protein>
    <recommendedName>
        <fullName evidence="6">Inositol-tetrakisphosphate 1-kinase 4</fullName>
        <ecNumber evidence="6">2.7.1.134</ecNumber>
    </recommendedName>
    <alternativeName>
        <fullName evidence="6">Inositol 1,3,4-trisphosphate 5/6-kinase 4</fullName>
        <shortName evidence="6">Inositol-triphosphate 5/6-kinase 4</shortName>
        <shortName evidence="6">Ins(1,3,4)P(3) 5/6-kinase 4</shortName>
        <shortName evidence="6">OsITP5/6K-4</shortName>
        <shortName evidence="6">OsITPK4</shortName>
        <ecNumber evidence="6">2.7.1.159</ecNumber>
    </alternativeName>
</protein>
<name>ITPK4_ORYSI</name>
<evidence type="ECO:0000250" key="1">
    <source>
        <dbReference type="UniProtKB" id="Q13572"/>
    </source>
</evidence>
<evidence type="ECO:0000250" key="2">
    <source>
        <dbReference type="UniProtKB" id="Q84Y01"/>
    </source>
</evidence>
<evidence type="ECO:0000250" key="3">
    <source>
        <dbReference type="UniProtKB" id="Q9XYQ1"/>
    </source>
</evidence>
<evidence type="ECO:0000255" key="4">
    <source>
        <dbReference type="PROSITE-ProRule" id="PRU00409"/>
    </source>
</evidence>
<evidence type="ECO:0000256" key="5">
    <source>
        <dbReference type="SAM" id="MobiDB-lite"/>
    </source>
</evidence>
<evidence type="ECO:0000305" key="6"/>
<evidence type="ECO:0000312" key="7">
    <source>
        <dbReference type="EMBL" id="EAY85788.1"/>
    </source>
</evidence>
<dbReference type="EC" id="2.7.1.134" evidence="6"/>
<dbReference type="EC" id="2.7.1.159" evidence="6"/>
<dbReference type="EMBL" id="CM000127">
    <property type="protein sequence ID" value="EAY85788.1"/>
    <property type="molecule type" value="Genomic_DNA"/>
</dbReference>
<dbReference type="SMR" id="A2X4M8"/>
<dbReference type="STRING" id="39946.A2X4M8"/>
<dbReference type="EnsemblPlants" id="BGIOSGA008174-TA">
    <property type="protein sequence ID" value="BGIOSGA008174-PA"/>
    <property type="gene ID" value="BGIOSGA008174"/>
</dbReference>
<dbReference type="EnsemblPlants" id="OsGoSa_02g0016680.01">
    <property type="protein sequence ID" value="OsGoSa_02g0016680.01"/>
    <property type="gene ID" value="OsGoSa_02g0016680"/>
</dbReference>
<dbReference type="EnsemblPlants" id="OsIR64_02g0016040.01">
    <property type="protein sequence ID" value="OsIR64_02g0016040.01"/>
    <property type="gene ID" value="OsIR64_02g0016040"/>
</dbReference>
<dbReference type="EnsemblPlants" id="OsKYG_02g0016150.01">
    <property type="protein sequence ID" value="OsKYG_02g0016150.01"/>
    <property type="gene ID" value="OsKYG_02g0016150"/>
</dbReference>
<dbReference type="EnsemblPlants" id="OsLaMu_02g0016200.01">
    <property type="protein sequence ID" value="OsLaMu_02g0016200.01"/>
    <property type="gene ID" value="OsLaMu_02g0016200"/>
</dbReference>
<dbReference type="EnsemblPlants" id="OsLima_02g0016600.01">
    <property type="protein sequence ID" value="OsLima_02g0016600.01"/>
    <property type="gene ID" value="OsLima_02g0016600"/>
</dbReference>
<dbReference type="EnsemblPlants" id="OsLiXu_02g0016470.01">
    <property type="protein sequence ID" value="OsLiXu_02g0016470.01"/>
    <property type="gene ID" value="OsLiXu_02g0016470"/>
</dbReference>
<dbReference type="EnsemblPlants" id="OsPr106_02g0016270.01">
    <property type="protein sequence ID" value="OsPr106_02g0016270.01"/>
    <property type="gene ID" value="OsPr106_02g0016270"/>
</dbReference>
<dbReference type="EnsemblPlants" id="OsZS97_02G016180_01">
    <property type="protein sequence ID" value="OsZS97_02G016180_01"/>
    <property type="gene ID" value="OsZS97_02G016180"/>
</dbReference>
<dbReference type="Gramene" id="BGIOSGA008174-TA">
    <property type="protein sequence ID" value="BGIOSGA008174-PA"/>
    <property type="gene ID" value="BGIOSGA008174"/>
</dbReference>
<dbReference type="Gramene" id="OsGoSa_02g0016680.01">
    <property type="protein sequence ID" value="OsGoSa_02g0016680.01"/>
    <property type="gene ID" value="OsGoSa_02g0016680"/>
</dbReference>
<dbReference type="Gramene" id="OsIR64_02g0016040.01">
    <property type="protein sequence ID" value="OsIR64_02g0016040.01"/>
    <property type="gene ID" value="OsIR64_02g0016040"/>
</dbReference>
<dbReference type="Gramene" id="OsKYG_02g0016150.01">
    <property type="protein sequence ID" value="OsKYG_02g0016150.01"/>
    <property type="gene ID" value="OsKYG_02g0016150"/>
</dbReference>
<dbReference type="Gramene" id="OsLaMu_02g0016200.01">
    <property type="protein sequence ID" value="OsLaMu_02g0016200.01"/>
    <property type="gene ID" value="OsLaMu_02g0016200"/>
</dbReference>
<dbReference type="Gramene" id="OsLima_02g0016600.01">
    <property type="protein sequence ID" value="OsLima_02g0016600.01"/>
    <property type="gene ID" value="OsLima_02g0016600"/>
</dbReference>
<dbReference type="Gramene" id="OsLiXu_02g0016470.01">
    <property type="protein sequence ID" value="OsLiXu_02g0016470.01"/>
    <property type="gene ID" value="OsLiXu_02g0016470"/>
</dbReference>
<dbReference type="Gramene" id="OsPr106_02g0016270.01">
    <property type="protein sequence ID" value="OsPr106_02g0016270.01"/>
    <property type="gene ID" value="OsPr106_02g0016270"/>
</dbReference>
<dbReference type="Gramene" id="OsZS97_02G016180_01">
    <property type="protein sequence ID" value="OsZS97_02G016180_01"/>
    <property type="gene ID" value="OsZS97_02G016180"/>
</dbReference>
<dbReference type="HOGENOM" id="CLU_041857_0_0_1"/>
<dbReference type="OMA" id="RYTLYDM"/>
<dbReference type="OrthoDB" id="25308at2759"/>
<dbReference type="Proteomes" id="UP000007015">
    <property type="component" value="Chromosome 2"/>
</dbReference>
<dbReference type="GO" id="GO:0005737">
    <property type="term" value="C:cytoplasm"/>
    <property type="evidence" value="ECO:0007669"/>
    <property type="project" value="TreeGrafter"/>
</dbReference>
<dbReference type="GO" id="GO:0005524">
    <property type="term" value="F:ATP binding"/>
    <property type="evidence" value="ECO:0007669"/>
    <property type="project" value="UniProtKB-KW"/>
</dbReference>
<dbReference type="GO" id="GO:0052726">
    <property type="term" value="F:inositol-1,3,4-trisphosphate 5-kinase activity"/>
    <property type="evidence" value="ECO:0007669"/>
    <property type="project" value="InterPro"/>
</dbReference>
<dbReference type="GO" id="GO:0052725">
    <property type="term" value="F:inositol-1,3,4-trisphosphate 6-kinase activity"/>
    <property type="evidence" value="ECO:0007669"/>
    <property type="project" value="InterPro"/>
</dbReference>
<dbReference type="GO" id="GO:0047325">
    <property type="term" value="F:inositol-3,4,5,6-tetrakisphosphate 1-kinase activity"/>
    <property type="evidence" value="ECO:0007669"/>
    <property type="project" value="UniProtKB-EC"/>
</dbReference>
<dbReference type="GO" id="GO:0000287">
    <property type="term" value="F:magnesium ion binding"/>
    <property type="evidence" value="ECO:0007669"/>
    <property type="project" value="InterPro"/>
</dbReference>
<dbReference type="GO" id="GO:0032957">
    <property type="term" value="P:inositol trisphosphate metabolic process"/>
    <property type="evidence" value="ECO:0007669"/>
    <property type="project" value="InterPro"/>
</dbReference>
<dbReference type="FunFam" id="3.30.470.20:FF:000087">
    <property type="entry name" value="Inositol-tetrakisphosphate 1-kinase"/>
    <property type="match status" value="1"/>
</dbReference>
<dbReference type="Gene3D" id="3.30.470.20">
    <property type="entry name" value="ATP-grasp fold, B domain"/>
    <property type="match status" value="1"/>
</dbReference>
<dbReference type="InterPro" id="IPR008656">
    <property type="entry name" value="Inositol_tetrakis-P_1-kinase"/>
</dbReference>
<dbReference type="InterPro" id="IPR040464">
    <property type="entry name" value="InsP(3)kin_ATP-grasp"/>
</dbReference>
<dbReference type="InterPro" id="IPR041429">
    <property type="entry name" value="ITPK1_N"/>
</dbReference>
<dbReference type="PANTHER" id="PTHR14217">
    <property type="entry name" value="INOSITOL-TETRAKISPHOSPHATE 1-KINASE"/>
    <property type="match status" value="1"/>
</dbReference>
<dbReference type="PANTHER" id="PTHR14217:SF2">
    <property type="entry name" value="INOSITOL-TETRAKISPHOSPHATE 1-KINASE 4"/>
    <property type="match status" value="1"/>
</dbReference>
<dbReference type="Pfam" id="PF05770">
    <property type="entry name" value="Ins134_P3_kin"/>
    <property type="match status" value="1"/>
</dbReference>
<dbReference type="Pfam" id="PF17927">
    <property type="entry name" value="Ins134_P3_kin_N"/>
    <property type="match status" value="1"/>
</dbReference>
<dbReference type="PIRSF" id="PIRSF038186">
    <property type="entry name" value="ITPK"/>
    <property type="match status" value="1"/>
</dbReference>
<dbReference type="SUPFAM" id="SSF56059">
    <property type="entry name" value="Glutathione synthetase ATP-binding domain-like"/>
    <property type="match status" value="1"/>
</dbReference>
<keyword id="KW-0067">ATP-binding</keyword>
<keyword id="KW-0418">Kinase</keyword>
<keyword id="KW-0460">Magnesium</keyword>
<keyword id="KW-0479">Metal-binding</keyword>
<keyword id="KW-0547">Nucleotide-binding</keyword>
<keyword id="KW-1185">Reference proteome</keyword>
<keyword id="KW-0808">Transferase</keyword>
<comment type="function">
    <text evidence="2">Kinase that can phosphorylate various inositol polyphosphate such as Ins(3,4,5,6)P4 or Ins(1,3,4)P3 and participates in phytic acid biosynthesis in developing seeds. Phytic acid is the primary storage form of phosphorus in cereal grains and other plant seeds.</text>
</comment>
<comment type="catalytic activity">
    <reaction evidence="6">
        <text>1D-myo-inositol 3,4,5,6-tetrakisphosphate + ATP = 1D-myo-inositol 1,3,4,5,6-pentakisphosphate + ADP + H(+)</text>
        <dbReference type="Rhea" id="RHEA:12452"/>
        <dbReference type="ChEBI" id="CHEBI:15378"/>
        <dbReference type="ChEBI" id="CHEBI:30616"/>
        <dbReference type="ChEBI" id="CHEBI:57539"/>
        <dbReference type="ChEBI" id="CHEBI:57733"/>
        <dbReference type="ChEBI" id="CHEBI:456216"/>
        <dbReference type="EC" id="2.7.1.134"/>
    </reaction>
</comment>
<comment type="catalytic activity">
    <reaction evidence="6">
        <text>1D-myo-inositol 1,3,4-trisphosphate + ATP = 1D-myo-inositol 1,3,4,5-tetrakisphosphate + ADP + H(+)</text>
        <dbReference type="Rhea" id="RHEA:13253"/>
        <dbReference type="ChEBI" id="CHEBI:15378"/>
        <dbReference type="ChEBI" id="CHEBI:30616"/>
        <dbReference type="ChEBI" id="CHEBI:57895"/>
        <dbReference type="ChEBI" id="CHEBI:58414"/>
        <dbReference type="ChEBI" id="CHEBI:456216"/>
        <dbReference type="EC" id="2.7.1.159"/>
    </reaction>
</comment>
<comment type="catalytic activity">
    <reaction evidence="6">
        <text>1D-myo-inositol 1,3,4-trisphosphate + ATP = 1D-myo-inositol 1,3,4,6-tetrakisphosphate + ADP + H(+)</text>
        <dbReference type="Rhea" id="RHEA:20940"/>
        <dbReference type="ChEBI" id="CHEBI:15378"/>
        <dbReference type="ChEBI" id="CHEBI:30616"/>
        <dbReference type="ChEBI" id="CHEBI:57660"/>
        <dbReference type="ChEBI" id="CHEBI:58414"/>
        <dbReference type="ChEBI" id="CHEBI:456216"/>
        <dbReference type="EC" id="2.7.1.159"/>
    </reaction>
</comment>
<comment type="cofactor">
    <cofactor evidence="1">
        <name>Mg(2+)</name>
        <dbReference type="ChEBI" id="CHEBI:18420"/>
    </cofactor>
    <text evidence="1">Binds 2 magnesium ions per subunit.</text>
</comment>
<comment type="subunit">
    <text evidence="1">Monomer.</text>
</comment>
<comment type="similarity">
    <text evidence="6">Belongs to the ITPK1 family.</text>
</comment>
<organism>
    <name type="scientific">Oryza sativa subsp. indica</name>
    <name type="common">Rice</name>
    <dbReference type="NCBI Taxonomy" id="39946"/>
    <lineage>
        <taxon>Eukaryota</taxon>
        <taxon>Viridiplantae</taxon>
        <taxon>Streptophyta</taxon>
        <taxon>Embryophyta</taxon>
        <taxon>Tracheophyta</taxon>
        <taxon>Spermatophyta</taxon>
        <taxon>Magnoliopsida</taxon>
        <taxon>Liliopsida</taxon>
        <taxon>Poales</taxon>
        <taxon>Poaceae</taxon>
        <taxon>BOP clade</taxon>
        <taxon>Oryzoideae</taxon>
        <taxon>Oryzeae</taxon>
        <taxon>Oryzinae</taxon>
        <taxon>Oryza</taxon>
        <taxon>Oryza sativa</taxon>
    </lineage>
</organism>
<sequence>MAPELSSPSSSPRYTVGYALLPEKVSSVVRPSLVALAADRGVRLVAVDVSRPLAEQGPFDLLVHKMYDRGWRAQLEELAARHPGVPVVVDSPGAIDRLLDRATMLDVVSGLRTPVSVPPQVVVSDAAADADELLARAALRFPLIAKPLAVDGSAESHDMRLVYRRDGVLPLLRAPLVLQEFVNHGGVLFKVYVVGDRATCVRRSSLPDVPARRLLDLDAEPSVPFANISNQPLPPPDDDGGAADDDTPAAGFVDEVARGLRRGLGLHLFNFDMIRERSEEHGDRYFIIDINYFPGYAKMPGYEAALTDFFLEMLRGTRPVPEQLGPGSGLDMEARKLEPGLGIGLRELESGRAQA</sequence>
<reference key="1">
    <citation type="journal article" date="2005" name="PLoS Biol.">
        <title>The genomes of Oryza sativa: a history of duplications.</title>
        <authorList>
            <person name="Yu J."/>
            <person name="Wang J."/>
            <person name="Lin W."/>
            <person name="Li S."/>
            <person name="Li H."/>
            <person name="Zhou J."/>
            <person name="Ni P."/>
            <person name="Dong W."/>
            <person name="Hu S."/>
            <person name="Zeng C."/>
            <person name="Zhang J."/>
            <person name="Zhang Y."/>
            <person name="Li R."/>
            <person name="Xu Z."/>
            <person name="Li S."/>
            <person name="Li X."/>
            <person name="Zheng H."/>
            <person name="Cong L."/>
            <person name="Lin L."/>
            <person name="Yin J."/>
            <person name="Geng J."/>
            <person name="Li G."/>
            <person name="Shi J."/>
            <person name="Liu J."/>
            <person name="Lv H."/>
            <person name="Li J."/>
            <person name="Wang J."/>
            <person name="Deng Y."/>
            <person name="Ran L."/>
            <person name="Shi X."/>
            <person name="Wang X."/>
            <person name="Wu Q."/>
            <person name="Li C."/>
            <person name="Ren X."/>
            <person name="Wang J."/>
            <person name="Wang X."/>
            <person name="Li D."/>
            <person name="Liu D."/>
            <person name="Zhang X."/>
            <person name="Ji Z."/>
            <person name="Zhao W."/>
            <person name="Sun Y."/>
            <person name="Zhang Z."/>
            <person name="Bao J."/>
            <person name="Han Y."/>
            <person name="Dong L."/>
            <person name="Ji J."/>
            <person name="Chen P."/>
            <person name="Wu S."/>
            <person name="Liu J."/>
            <person name="Xiao Y."/>
            <person name="Bu D."/>
            <person name="Tan J."/>
            <person name="Yang L."/>
            <person name="Ye C."/>
            <person name="Zhang J."/>
            <person name="Xu J."/>
            <person name="Zhou Y."/>
            <person name="Yu Y."/>
            <person name="Zhang B."/>
            <person name="Zhuang S."/>
            <person name="Wei H."/>
            <person name="Liu B."/>
            <person name="Lei M."/>
            <person name="Yu H."/>
            <person name="Li Y."/>
            <person name="Xu H."/>
            <person name="Wei S."/>
            <person name="He X."/>
            <person name="Fang L."/>
            <person name="Zhang Z."/>
            <person name="Zhang Y."/>
            <person name="Huang X."/>
            <person name="Su Z."/>
            <person name="Tong W."/>
            <person name="Li J."/>
            <person name="Tong Z."/>
            <person name="Li S."/>
            <person name="Ye J."/>
            <person name="Wang L."/>
            <person name="Fang L."/>
            <person name="Lei T."/>
            <person name="Chen C.-S."/>
            <person name="Chen H.-C."/>
            <person name="Xu Z."/>
            <person name="Li H."/>
            <person name="Huang H."/>
            <person name="Zhang F."/>
            <person name="Xu H."/>
            <person name="Li N."/>
            <person name="Zhao C."/>
            <person name="Li S."/>
            <person name="Dong L."/>
            <person name="Huang Y."/>
            <person name="Li L."/>
            <person name="Xi Y."/>
            <person name="Qi Q."/>
            <person name="Li W."/>
            <person name="Zhang B."/>
            <person name="Hu W."/>
            <person name="Zhang Y."/>
            <person name="Tian X."/>
            <person name="Jiao Y."/>
            <person name="Liang X."/>
            <person name="Jin J."/>
            <person name="Gao L."/>
            <person name="Zheng W."/>
            <person name="Hao B."/>
            <person name="Liu S.-M."/>
            <person name="Wang W."/>
            <person name="Yuan L."/>
            <person name="Cao M."/>
            <person name="McDermott J."/>
            <person name="Samudrala R."/>
            <person name="Wang J."/>
            <person name="Wong G.K.-S."/>
            <person name="Yang H."/>
        </authorList>
    </citation>
    <scope>NUCLEOTIDE SEQUENCE [LARGE SCALE GENOMIC DNA]</scope>
    <source>
        <strain>cv. 93-11</strain>
    </source>
</reference>
<gene>
    <name type="primary">ITPK4</name>
    <name evidence="7" type="ORF">OsI_07149</name>
</gene>
<accession>A2X4M8</accession>